<protein>
    <recommendedName>
        <fullName evidence="1">Large ribosomal subunit protein uL29</fullName>
    </recommendedName>
    <alternativeName>
        <fullName evidence="2">50S ribosomal protein L29</fullName>
    </alternativeName>
</protein>
<organism>
    <name type="scientific">Streptococcus pyogenes serotype M3 (strain ATCC BAA-595 / MGAS315)</name>
    <dbReference type="NCBI Taxonomy" id="198466"/>
    <lineage>
        <taxon>Bacteria</taxon>
        <taxon>Bacillati</taxon>
        <taxon>Bacillota</taxon>
        <taxon>Bacilli</taxon>
        <taxon>Lactobacillales</taxon>
        <taxon>Streptococcaceae</taxon>
        <taxon>Streptococcus</taxon>
    </lineage>
</organism>
<sequence length="68" mass="7962">MKLQEIKDFVKELRGLSQEELAKKENELKKELFDLRFQAAAGQLEKTARLDEVKKQIARVKTVQSEMK</sequence>
<comment type="similarity">
    <text evidence="1">Belongs to the universal ribosomal protein uL29 family.</text>
</comment>
<feature type="chain" id="PRO_0000130471" description="Large ribosomal subunit protein uL29">
    <location>
        <begin position="1"/>
        <end position="68"/>
    </location>
</feature>
<dbReference type="EMBL" id="AE014074">
    <property type="protein sequence ID" value="AAM78655.1"/>
    <property type="molecule type" value="Genomic_DNA"/>
</dbReference>
<dbReference type="RefSeq" id="WP_000775731.1">
    <property type="nucleotide sequence ID" value="NC_004070.1"/>
</dbReference>
<dbReference type="SMR" id="P0DE32"/>
<dbReference type="GeneID" id="69900034"/>
<dbReference type="KEGG" id="spg:SpyM3_0048"/>
<dbReference type="HOGENOM" id="CLU_158491_5_2_9"/>
<dbReference type="Proteomes" id="UP000000564">
    <property type="component" value="Chromosome"/>
</dbReference>
<dbReference type="GO" id="GO:0022625">
    <property type="term" value="C:cytosolic large ribosomal subunit"/>
    <property type="evidence" value="ECO:0007669"/>
    <property type="project" value="TreeGrafter"/>
</dbReference>
<dbReference type="GO" id="GO:0003735">
    <property type="term" value="F:structural constituent of ribosome"/>
    <property type="evidence" value="ECO:0007669"/>
    <property type="project" value="InterPro"/>
</dbReference>
<dbReference type="GO" id="GO:0006412">
    <property type="term" value="P:translation"/>
    <property type="evidence" value="ECO:0007669"/>
    <property type="project" value="UniProtKB-UniRule"/>
</dbReference>
<dbReference type="CDD" id="cd00427">
    <property type="entry name" value="Ribosomal_L29_HIP"/>
    <property type="match status" value="1"/>
</dbReference>
<dbReference type="FunFam" id="1.10.287.310:FF:000001">
    <property type="entry name" value="50S ribosomal protein L29"/>
    <property type="match status" value="1"/>
</dbReference>
<dbReference type="Gene3D" id="1.10.287.310">
    <property type="match status" value="1"/>
</dbReference>
<dbReference type="HAMAP" id="MF_00374">
    <property type="entry name" value="Ribosomal_uL29"/>
    <property type="match status" value="1"/>
</dbReference>
<dbReference type="InterPro" id="IPR050063">
    <property type="entry name" value="Ribosomal_protein_uL29"/>
</dbReference>
<dbReference type="InterPro" id="IPR001854">
    <property type="entry name" value="Ribosomal_uL29"/>
</dbReference>
<dbReference type="InterPro" id="IPR018254">
    <property type="entry name" value="Ribosomal_uL29_CS"/>
</dbReference>
<dbReference type="InterPro" id="IPR036049">
    <property type="entry name" value="Ribosomal_uL29_sf"/>
</dbReference>
<dbReference type="NCBIfam" id="TIGR00012">
    <property type="entry name" value="L29"/>
    <property type="match status" value="1"/>
</dbReference>
<dbReference type="PANTHER" id="PTHR10916">
    <property type="entry name" value="60S RIBOSOMAL PROTEIN L35/50S RIBOSOMAL PROTEIN L29"/>
    <property type="match status" value="1"/>
</dbReference>
<dbReference type="PANTHER" id="PTHR10916:SF0">
    <property type="entry name" value="LARGE RIBOSOMAL SUBUNIT PROTEIN UL29C"/>
    <property type="match status" value="1"/>
</dbReference>
<dbReference type="Pfam" id="PF00831">
    <property type="entry name" value="Ribosomal_L29"/>
    <property type="match status" value="1"/>
</dbReference>
<dbReference type="SUPFAM" id="SSF46561">
    <property type="entry name" value="Ribosomal protein L29 (L29p)"/>
    <property type="match status" value="1"/>
</dbReference>
<dbReference type="PROSITE" id="PS00579">
    <property type="entry name" value="RIBOSOMAL_L29"/>
    <property type="match status" value="1"/>
</dbReference>
<evidence type="ECO:0000255" key="1">
    <source>
        <dbReference type="HAMAP-Rule" id="MF_00374"/>
    </source>
</evidence>
<evidence type="ECO:0000305" key="2"/>
<gene>
    <name evidence="1" type="primary">rpmC</name>
    <name type="ordered locus">SpyM3_0048</name>
</gene>
<accession>P0DE32</accession>
<accession>P66177</accession>
<accession>Q9A1W6</accession>
<reference key="1">
    <citation type="journal article" date="2002" name="Proc. Natl. Acad. Sci. U.S.A.">
        <title>Genome sequence of a serotype M3 strain of group A Streptococcus: phage-encoded toxins, the high-virulence phenotype, and clone emergence.</title>
        <authorList>
            <person name="Beres S.B."/>
            <person name="Sylva G.L."/>
            <person name="Barbian K.D."/>
            <person name="Lei B."/>
            <person name="Hoff J.S."/>
            <person name="Mammarella N.D."/>
            <person name="Liu M.-Y."/>
            <person name="Smoot J.C."/>
            <person name="Porcella S.F."/>
            <person name="Parkins L.D."/>
            <person name="Campbell D.S."/>
            <person name="Smith T.M."/>
            <person name="McCormick J.K."/>
            <person name="Leung D.Y.M."/>
            <person name="Schlievert P.M."/>
            <person name="Musser J.M."/>
        </authorList>
    </citation>
    <scope>NUCLEOTIDE SEQUENCE [LARGE SCALE GENOMIC DNA]</scope>
    <source>
        <strain>ATCC BAA-595 / MGAS315</strain>
    </source>
</reference>
<name>RL29_STRP3</name>
<proteinExistence type="inferred from homology"/>
<keyword id="KW-0687">Ribonucleoprotein</keyword>
<keyword id="KW-0689">Ribosomal protein</keyword>